<dbReference type="EC" id="3.1.3.11" evidence="1"/>
<dbReference type="EMBL" id="CP000148">
    <property type="protein sequence ID" value="ABB32150.1"/>
    <property type="molecule type" value="Genomic_DNA"/>
</dbReference>
<dbReference type="RefSeq" id="WP_004511922.1">
    <property type="nucleotide sequence ID" value="NC_007517.1"/>
</dbReference>
<dbReference type="SMR" id="Q39UC4"/>
<dbReference type="STRING" id="269799.Gmet_1921"/>
<dbReference type="KEGG" id="gme:Gmet_1921"/>
<dbReference type="eggNOG" id="COG0158">
    <property type="taxonomic scope" value="Bacteria"/>
</dbReference>
<dbReference type="HOGENOM" id="CLU_039977_1_0_7"/>
<dbReference type="UniPathway" id="UPA00138"/>
<dbReference type="Proteomes" id="UP000007073">
    <property type="component" value="Chromosome"/>
</dbReference>
<dbReference type="GO" id="GO:0005829">
    <property type="term" value="C:cytosol"/>
    <property type="evidence" value="ECO:0007669"/>
    <property type="project" value="TreeGrafter"/>
</dbReference>
<dbReference type="GO" id="GO:0042132">
    <property type="term" value="F:fructose 1,6-bisphosphate 1-phosphatase activity"/>
    <property type="evidence" value="ECO:0007669"/>
    <property type="project" value="UniProtKB-UniRule"/>
</dbReference>
<dbReference type="GO" id="GO:0000287">
    <property type="term" value="F:magnesium ion binding"/>
    <property type="evidence" value="ECO:0007669"/>
    <property type="project" value="UniProtKB-UniRule"/>
</dbReference>
<dbReference type="GO" id="GO:0030388">
    <property type="term" value="P:fructose 1,6-bisphosphate metabolic process"/>
    <property type="evidence" value="ECO:0007669"/>
    <property type="project" value="TreeGrafter"/>
</dbReference>
<dbReference type="GO" id="GO:0006002">
    <property type="term" value="P:fructose 6-phosphate metabolic process"/>
    <property type="evidence" value="ECO:0007669"/>
    <property type="project" value="TreeGrafter"/>
</dbReference>
<dbReference type="GO" id="GO:0006000">
    <property type="term" value="P:fructose metabolic process"/>
    <property type="evidence" value="ECO:0007669"/>
    <property type="project" value="TreeGrafter"/>
</dbReference>
<dbReference type="GO" id="GO:0006094">
    <property type="term" value="P:gluconeogenesis"/>
    <property type="evidence" value="ECO:0007669"/>
    <property type="project" value="UniProtKB-UniRule"/>
</dbReference>
<dbReference type="GO" id="GO:0005986">
    <property type="term" value="P:sucrose biosynthetic process"/>
    <property type="evidence" value="ECO:0007669"/>
    <property type="project" value="TreeGrafter"/>
</dbReference>
<dbReference type="CDD" id="cd00354">
    <property type="entry name" value="FBPase"/>
    <property type="match status" value="1"/>
</dbReference>
<dbReference type="Gene3D" id="3.40.190.80">
    <property type="match status" value="1"/>
</dbReference>
<dbReference type="Gene3D" id="3.30.540.10">
    <property type="entry name" value="Fructose-1,6-Bisphosphatase, subunit A, domain 1"/>
    <property type="match status" value="1"/>
</dbReference>
<dbReference type="HAMAP" id="MF_01855">
    <property type="entry name" value="FBPase_class1"/>
    <property type="match status" value="1"/>
</dbReference>
<dbReference type="InterPro" id="IPR044015">
    <property type="entry name" value="FBPase_C_dom"/>
</dbReference>
<dbReference type="InterPro" id="IPR000146">
    <property type="entry name" value="FBPase_class-1"/>
</dbReference>
<dbReference type="InterPro" id="IPR033391">
    <property type="entry name" value="FBPase_N"/>
</dbReference>
<dbReference type="InterPro" id="IPR028343">
    <property type="entry name" value="FBPtase"/>
</dbReference>
<dbReference type="InterPro" id="IPR023079">
    <property type="entry name" value="SBPase"/>
</dbReference>
<dbReference type="NCBIfam" id="NF006783">
    <property type="entry name" value="PRK09293.2-4"/>
    <property type="match status" value="1"/>
</dbReference>
<dbReference type="PANTHER" id="PTHR11556">
    <property type="entry name" value="FRUCTOSE-1,6-BISPHOSPHATASE-RELATED"/>
    <property type="match status" value="1"/>
</dbReference>
<dbReference type="PANTHER" id="PTHR11556:SF35">
    <property type="entry name" value="SEDOHEPTULOSE-1,7-BISPHOSPHATASE, CHLOROPLASTIC"/>
    <property type="match status" value="1"/>
</dbReference>
<dbReference type="Pfam" id="PF00316">
    <property type="entry name" value="FBPase"/>
    <property type="match status" value="1"/>
</dbReference>
<dbReference type="Pfam" id="PF18913">
    <property type="entry name" value="FBPase_C"/>
    <property type="match status" value="1"/>
</dbReference>
<dbReference type="PIRSF" id="PIRSF500210">
    <property type="entry name" value="FBPtase"/>
    <property type="match status" value="1"/>
</dbReference>
<dbReference type="PIRSF" id="PIRSF000904">
    <property type="entry name" value="FBPtase_SBPase"/>
    <property type="match status" value="1"/>
</dbReference>
<dbReference type="PRINTS" id="PR01958">
    <property type="entry name" value="S17BPHPHTASE"/>
</dbReference>
<dbReference type="SUPFAM" id="SSF56655">
    <property type="entry name" value="Carbohydrate phosphatase"/>
    <property type="match status" value="1"/>
</dbReference>
<accession>Q39UC4</accession>
<keyword id="KW-0119">Carbohydrate metabolism</keyword>
<keyword id="KW-0963">Cytoplasm</keyword>
<keyword id="KW-0378">Hydrolase</keyword>
<keyword id="KW-0460">Magnesium</keyword>
<keyword id="KW-0479">Metal-binding</keyword>
<keyword id="KW-1185">Reference proteome</keyword>
<comment type="catalytic activity">
    <reaction evidence="1">
        <text>beta-D-fructose 1,6-bisphosphate + H2O = beta-D-fructose 6-phosphate + phosphate</text>
        <dbReference type="Rhea" id="RHEA:11064"/>
        <dbReference type="ChEBI" id="CHEBI:15377"/>
        <dbReference type="ChEBI" id="CHEBI:32966"/>
        <dbReference type="ChEBI" id="CHEBI:43474"/>
        <dbReference type="ChEBI" id="CHEBI:57634"/>
        <dbReference type="EC" id="3.1.3.11"/>
    </reaction>
</comment>
<comment type="cofactor">
    <cofactor evidence="1">
        <name>Mg(2+)</name>
        <dbReference type="ChEBI" id="CHEBI:18420"/>
    </cofactor>
    <text evidence="1">Binds 2 magnesium ions per subunit.</text>
</comment>
<comment type="pathway">
    <text evidence="1">Carbohydrate biosynthesis; gluconeogenesis.</text>
</comment>
<comment type="subunit">
    <text evidence="1">Homotetramer.</text>
</comment>
<comment type="subcellular location">
    <subcellularLocation>
        <location evidence="1">Cytoplasm</location>
    </subcellularLocation>
</comment>
<comment type="similarity">
    <text evidence="1">Belongs to the FBPase class 1 family.</text>
</comment>
<reference key="1">
    <citation type="journal article" date="2009" name="BMC Microbiol.">
        <title>The genome sequence of Geobacter metallireducens: features of metabolism, physiology and regulation common and dissimilar to Geobacter sulfurreducens.</title>
        <authorList>
            <person name="Aklujkar M."/>
            <person name="Krushkal J."/>
            <person name="DiBartolo G."/>
            <person name="Lapidus A."/>
            <person name="Land M.L."/>
            <person name="Lovley D.R."/>
        </authorList>
    </citation>
    <scope>NUCLEOTIDE SEQUENCE [LARGE SCALE GENOMIC DNA]</scope>
    <source>
        <strain>ATCC 53774 / DSM 7210 / GS-15</strain>
    </source>
</reference>
<organism>
    <name type="scientific">Geobacter metallireducens (strain ATCC 53774 / DSM 7210 / GS-15)</name>
    <dbReference type="NCBI Taxonomy" id="269799"/>
    <lineage>
        <taxon>Bacteria</taxon>
        <taxon>Pseudomonadati</taxon>
        <taxon>Thermodesulfobacteriota</taxon>
        <taxon>Desulfuromonadia</taxon>
        <taxon>Geobacterales</taxon>
        <taxon>Geobacteraceae</taxon>
        <taxon>Geobacter</taxon>
    </lineage>
</organism>
<gene>
    <name evidence="1" type="primary">fbp</name>
    <name type="ordered locus">Gmet_1921</name>
</gene>
<protein>
    <recommendedName>
        <fullName evidence="1">Fructose-1,6-bisphosphatase class 1</fullName>
        <shortName evidence="1">FBPase class 1</shortName>
        <ecNumber evidence="1">3.1.3.11</ecNumber>
    </recommendedName>
    <alternativeName>
        <fullName evidence="1">D-fructose-1,6-bisphosphate 1-phosphohydrolase class 1</fullName>
    </alternativeName>
</protein>
<name>F16PA_GEOMG</name>
<sequence length="314" mass="34634">MPFSEPGKTKFQVDLRRHLRNQGICDNLVHLICEIAEASKYVINAVRTGDLGVAGTSNLYGEEQLALDVLSDRIIKKRLIHSGVVCNIASEEMDEIFQAQADADGLYSVAYDPLDGSSLVDVNLAVGTIVSIYEGCNLLQKGRNQVAALYILYGPRVSMVYSVGRGVHEFTMNHLMEFTLSRENIVMQEEGNIYAPGGLRNKYQEGTEQFVRYLEEKGAKLRYSGGFVPDINQVIMKGKGIFMYPALNGSPNGKLRLLFELNAMAYLVENAGGAATDGKQPILDLEPHSLDQRAPVYIGCKADVVKAMEFVSRN</sequence>
<feature type="chain" id="PRO_0000364559" description="Fructose-1,6-bisphosphatase class 1">
    <location>
        <begin position="1"/>
        <end position="314"/>
    </location>
</feature>
<feature type="binding site" evidence="1">
    <location>
        <position position="91"/>
    </location>
    <ligand>
        <name>Mg(2+)</name>
        <dbReference type="ChEBI" id="CHEBI:18420"/>
        <label>1</label>
    </ligand>
</feature>
<feature type="binding site" evidence="1">
    <location>
        <position position="112"/>
    </location>
    <ligand>
        <name>Mg(2+)</name>
        <dbReference type="ChEBI" id="CHEBI:18420"/>
        <label>1</label>
    </ligand>
</feature>
<feature type="binding site" evidence="1">
    <location>
        <position position="112"/>
    </location>
    <ligand>
        <name>Mg(2+)</name>
        <dbReference type="ChEBI" id="CHEBI:18420"/>
        <label>2</label>
    </ligand>
</feature>
<feature type="binding site" evidence="1">
    <location>
        <position position="114"/>
    </location>
    <ligand>
        <name>Mg(2+)</name>
        <dbReference type="ChEBI" id="CHEBI:18420"/>
        <label>1</label>
    </ligand>
</feature>
<feature type="binding site" evidence="1">
    <location>
        <begin position="115"/>
        <end position="118"/>
    </location>
    <ligand>
        <name>substrate</name>
    </ligand>
</feature>
<feature type="binding site" evidence="1">
    <location>
        <position position="115"/>
    </location>
    <ligand>
        <name>Mg(2+)</name>
        <dbReference type="ChEBI" id="CHEBI:18420"/>
        <label>2</label>
    </ligand>
</feature>
<feature type="binding site" evidence="1">
    <location>
        <position position="223"/>
    </location>
    <ligand>
        <name>substrate</name>
    </ligand>
</feature>
<feature type="binding site" evidence="1">
    <location>
        <position position="254"/>
    </location>
    <ligand>
        <name>substrate</name>
    </ligand>
</feature>
<feature type="binding site" evidence="1">
    <location>
        <position position="260"/>
    </location>
    <ligand>
        <name>Mg(2+)</name>
        <dbReference type="ChEBI" id="CHEBI:18420"/>
        <label>2</label>
    </ligand>
</feature>
<evidence type="ECO:0000255" key="1">
    <source>
        <dbReference type="HAMAP-Rule" id="MF_01855"/>
    </source>
</evidence>
<proteinExistence type="inferred from homology"/>